<keyword id="KW-0963">Cytoplasm</keyword>
<keyword id="KW-0312">Gluconeogenesis</keyword>
<keyword id="KW-0324">Glycolysis</keyword>
<keyword id="KW-0413">Isomerase</keyword>
<keyword id="KW-1185">Reference proteome</keyword>
<sequence length="232" mass="25476">MILAANFKTNHTRKSTRHYLERLSNFLFETSCEHDIFLFPPPLALDFFDDIGGVCIGTQNAYPAPSGAFTGEVGSEQLEELAIQTILIGHSERRGILGESQAFCAEKFRYYASLGYTIFYCIGESLEVRRAGIEATIRHNLSQLEGIDLSYPKLIIAYEPIWAIGTGVSASLEQIQETHAALKAHLSCPLLYGGSVNLSNIAEILALPEVDGALIGSASLKVEDFCQMIQKI</sequence>
<comment type="function">
    <text evidence="1">Involved in the gluconeogenesis. Catalyzes stereospecifically the conversion of dihydroxyacetone phosphate (DHAP) to D-glyceraldehyde-3-phosphate (G3P).</text>
</comment>
<comment type="catalytic activity">
    <reaction evidence="1">
        <text>D-glyceraldehyde 3-phosphate = dihydroxyacetone phosphate</text>
        <dbReference type="Rhea" id="RHEA:18585"/>
        <dbReference type="ChEBI" id="CHEBI:57642"/>
        <dbReference type="ChEBI" id="CHEBI:59776"/>
        <dbReference type="EC" id="5.3.1.1"/>
    </reaction>
</comment>
<comment type="pathway">
    <text evidence="1">Carbohydrate biosynthesis; gluconeogenesis.</text>
</comment>
<comment type="pathway">
    <text evidence="1">Carbohydrate degradation; glycolysis; D-glyceraldehyde 3-phosphate from glycerone phosphate: step 1/1.</text>
</comment>
<comment type="subunit">
    <text evidence="1">Homodimer.</text>
</comment>
<comment type="subcellular location">
    <subcellularLocation>
        <location evidence="1">Cytoplasm</location>
    </subcellularLocation>
</comment>
<comment type="similarity">
    <text evidence="1">Belongs to the triosephosphate isomerase family.</text>
</comment>
<gene>
    <name evidence="1" type="primary">tpiA</name>
    <name type="ordered locus">WS0424</name>
</gene>
<organism>
    <name type="scientific">Wolinella succinogenes (strain ATCC 29543 / DSM 1740 / CCUG 13145 / JCM 31913 / LMG 7466 / NCTC 11488 / FDC 602W)</name>
    <name type="common">Vibrio succinogenes</name>
    <dbReference type="NCBI Taxonomy" id="273121"/>
    <lineage>
        <taxon>Bacteria</taxon>
        <taxon>Pseudomonadati</taxon>
        <taxon>Campylobacterota</taxon>
        <taxon>Epsilonproteobacteria</taxon>
        <taxon>Campylobacterales</taxon>
        <taxon>Helicobacteraceae</taxon>
        <taxon>Wolinella</taxon>
    </lineage>
</organism>
<proteinExistence type="inferred from homology"/>
<dbReference type="EC" id="5.3.1.1" evidence="1"/>
<dbReference type="EMBL" id="BX571658">
    <property type="protein sequence ID" value="CAE09568.1"/>
    <property type="molecule type" value="Genomic_DNA"/>
</dbReference>
<dbReference type="RefSeq" id="WP_011138368.1">
    <property type="nucleotide sequence ID" value="NC_005090.1"/>
</dbReference>
<dbReference type="SMR" id="Q7MA77"/>
<dbReference type="STRING" id="273121.WS0424"/>
<dbReference type="KEGG" id="wsu:WS0424"/>
<dbReference type="eggNOG" id="COG0149">
    <property type="taxonomic scope" value="Bacteria"/>
</dbReference>
<dbReference type="HOGENOM" id="CLU_024251_2_3_7"/>
<dbReference type="UniPathway" id="UPA00109">
    <property type="reaction ID" value="UER00189"/>
</dbReference>
<dbReference type="UniPathway" id="UPA00138"/>
<dbReference type="Proteomes" id="UP000000422">
    <property type="component" value="Chromosome"/>
</dbReference>
<dbReference type="GO" id="GO:0005829">
    <property type="term" value="C:cytosol"/>
    <property type="evidence" value="ECO:0007669"/>
    <property type="project" value="TreeGrafter"/>
</dbReference>
<dbReference type="GO" id="GO:0004807">
    <property type="term" value="F:triose-phosphate isomerase activity"/>
    <property type="evidence" value="ECO:0007669"/>
    <property type="project" value="UniProtKB-UniRule"/>
</dbReference>
<dbReference type="GO" id="GO:0006094">
    <property type="term" value="P:gluconeogenesis"/>
    <property type="evidence" value="ECO:0007669"/>
    <property type="project" value="UniProtKB-UniRule"/>
</dbReference>
<dbReference type="GO" id="GO:0046166">
    <property type="term" value="P:glyceraldehyde-3-phosphate biosynthetic process"/>
    <property type="evidence" value="ECO:0007669"/>
    <property type="project" value="TreeGrafter"/>
</dbReference>
<dbReference type="GO" id="GO:0019563">
    <property type="term" value="P:glycerol catabolic process"/>
    <property type="evidence" value="ECO:0007669"/>
    <property type="project" value="TreeGrafter"/>
</dbReference>
<dbReference type="GO" id="GO:0006096">
    <property type="term" value="P:glycolytic process"/>
    <property type="evidence" value="ECO:0007669"/>
    <property type="project" value="UniProtKB-UniRule"/>
</dbReference>
<dbReference type="CDD" id="cd00311">
    <property type="entry name" value="TIM"/>
    <property type="match status" value="1"/>
</dbReference>
<dbReference type="Gene3D" id="3.20.20.70">
    <property type="entry name" value="Aldolase class I"/>
    <property type="match status" value="1"/>
</dbReference>
<dbReference type="HAMAP" id="MF_00147_B">
    <property type="entry name" value="TIM_B"/>
    <property type="match status" value="1"/>
</dbReference>
<dbReference type="InterPro" id="IPR013785">
    <property type="entry name" value="Aldolase_TIM"/>
</dbReference>
<dbReference type="InterPro" id="IPR035990">
    <property type="entry name" value="TIM_sf"/>
</dbReference>
<dbReference type="InterPro" id="IPR022896">
    <property type="entry name" value="TrioseP_Isoase_bac/euk"/>
</dbReference>
<dbReference type="InterPro" id="IPR000652">
    <property type="entry name" value="Triosephosphate_isomerase"/>
</dbReference>
<dbReference type="InterPro" id="IPR020861">
    <property type="entry name" value="Triosephosphate_isomerase_AS"/>
</dbReference>
<dbReference type="NCBIfam" id="NF000728">
    <property type="entry name" value="PRK00042.3-2"/>
    <property type="match status" value="1"/>
</dbReference>
<dbReference type="PANTHER" id="PTHR21139">
    <property type="entry name" value="TRIOSEPHOSPHATE ISOMERASE"/>
    <property type="match status" value="1"/>
</dbReference>
<dbReference type="PANTHER" id="PTHR21139:SF42">
    <property type="entry name" value="TRIOSEPHOSPHATE ISOMERASE"/>
    <property type="match status" value="1"/>
</dbReference>
<dbReference type="Pfam" id="PF00121">
    <property type="entry name" value="TIM"/>
    <property type="match status" value="1"/>
</dbReference>
<dbReference type="SUPFAM" id="SSF51351">
    <property type="entry name" value="Triosephosphate isomerase (TIM)"/>
    <property type="match status" value="1"/>
</dbReference>
<dbReference type="PROSITE" id="PS00171">
    <property type="entry name" value="TIM_1"/>
    <property type="match status" value="1"/>
</dbReference>
<dbReference type="PROSITE" id="PS51440">
    <property type="entry name" value="TIM_2"/>
    <property type="match status" value="1"/>
</dbReference>
<accession>Q7MA77</accession>
<reference key="1">
    <citation type="journal article" date="2003" name="Proc. Natl. Acad. Sci. U.S.A.">
        <title>Complete genome sequence and analysis of Wolinella succinogenes.</title>
        <authorList>
            <person name="Baar C."/>
            <person name="Eppinger M."/>
            <person name="Raddatz G."/>
            <person name="Simon J."/>
            <person name="Lanz C."/>
            <person name="Klimmek O."/>
            <person name="Nandakumar R."/>
            <person name="Gross R."/>
            <person name="Rosinus A."/>
            <person name="Keller H."/>
            <person name="Jagtap P."/>
            <person name="Linke B."/>
            <person name="Meyer F."/>
            <person name="Lederer H."/>
            <person name="Schuster S.C."/>
        </authorList>
    </citation>
    <scope>NUCLEOTIDE SEQUENCE [LARGE SCALE GENOMIC DNA]</scope>
    <source>
        <strain>ATCC 29543 / DSM 1740 / CCUG 13145 / JCM 31913 / LMG 7466 / NCTC 11488 / FDC 602W</strain>
    </source>
</reference>
<evidence type="ECO:0000255" key="1">
    <source>
        <dbReference type="HAMAP-Rule" id="MF_00147"/>
    </source>
</evidence>
<protein>
    <recommendedName>
        <fullName evidence="1">Triosephosphate isomerase</fullName>
        <shortName evidence="1">TIM</shortName>
        <shortName evidence="1">TPI</shortName>
        <ecNumber evidence="1">5.3.1.1</ecNumber>
    </recommendedName>
    <alternativeName>
        <fullName evidence="1">Triose-phosphate isomerase</fullName>
    </alternativeName>
</protein>
<feature type="chain" id="PRO_0000090320" description="Triosephosphate isomerase">
    <location>
        <begin position="1"/>
        <end position="232"/>
    </location>
</feature>
<feature type="active site" description="Electrophile" evidence="1">
    <location>
        <position position="90"/>
    </location>
</feature>
<feature type="active site" description="Proton acceptor" evidence="1">
    <location>
        <position position="159"/>
    </location>
</feature>
<feature type="binding site" evidence="1">
    <location>
        <begin position="6"/>
        <end position="8"/>
    </location>
    <ligand>
        <name>substrate</name>
    </ligand>
</feature>
<feature type="binding site" evidence="1">
    <location>
        <position position="165"/>
    </location>
    <ligand>
        <name>substrate</name>
    </ligand>
</feature>
<feature type="binding site" evidence="1">
    <location>
        <position position="195"/>
    </location>
    <ligand>
        <name>substrate</name>
    </ligand>
</feature>
<name>TPIS_WOLSU</name>